<dbReference type="EC" id="3.1.1.2" evidence="2"/>
<dbReference type="EC" id="3.1.1.81" evidence="2"/>
<dbReference type="EC" id="3.1.8.1" evidence="2"/>
<dbReference type="EMBL" id="CH473959">
    <property type="protein sequence ID" value="EDM15017.1"/>
    <property type="molecule type" value="Genomic_DNA"/>
</dbReference>
<dbReference type="EMBL" id="BC091403">
    <property type="protein sequence ID" value="AAH91403.1"/>
    <property type="molecule type" value="mRNA"/>
</dbReference>
<dbReference type="EMBL" id="U94856">
    <property type="protein sequence ID" value="AAB53441.1"/>
    <property type="molecule type" value="mRNA"/>
</dbReference>
<dbReference type="PIR" id="PT0088">
    <property type="entry name" value="PT0088"/>
</dbReference>
<dbReference type="RefSeq" id="NP_114466.1">
    <property type="nucleotide sequence ID" value="NM_032077.1"/>
</dbReference>
<dbReference type="SMR" id="P55159"/>
<dbReference type="FunCoup" id="P55159">
    <property type="interactions" value="8"/>
</dbReference>
<dbReference type="IntAct" id="P55159">
    <property type="interactions" value="1"/>
</dbReference>
<dbReference type="STRING" id="10116.ENSRNOP00000011823"/>
<dbReference type="GlyCosmos" id="P55159">
    <property type="glycosylation" value="3 sites, No reported glycans"/>
</dbReference>
<dbReference type="GlyGen" id="P55159">
    <property type="glycosylation" value="3 sites"/>
</dbReference>
<dbReference type="iPTMnet" id="P55159"/>
<dbReference type="PhosphoSitePlus" id="P55159"/>
<dbReference type="PaxDb" id="10116-ENSRNOP00000011823"/>
<dbReference type="GeneID" id="84024"/>
<dbReference type="KEGG" id="rno:84024"/>
<dbReference type="UCSC" id="RGD:620062">
    <property type="organism name" value="rat"/>
</dbReference>
<dbReference type="AGR" id="RGD:620062"/>
<dbReference type="CTD" id="5444"/>
<dbReference type="RGD" id="620062">
    <property type="gene designation" value="Pon1"/>
</dbReference>
<dbReference type="VEuPathDB" id="HostDB:ENSRNOG00000008902"/>
<dbReference type="eggNOG" id="ENOG502S3B5">
    <property type="taxonomic scope" value="Eukaryota"/>
</dbReference>
<dbReference type="HOGENOM" id="CLU_049839_0_1_1"/>
<dbReference type="InParanoid" id="P55159"/>
<dbReference type="OrthoDB" id="16896at9989"/>
<dbReference type="PhylomeDB" id="P55159"/>
<dbReference type="TreeFam" id="TF322436"/>
<dbReference type="BRENDA" id="3.1.1.2">
    <property type="organism ID" value="5301"/>
</dbReference>
<dbReference type="BRENDA" id="3.1.8.1">
    <property type="organism ID" value="5301"/>
</dbReference>
<dbReference type="Reactome" id="R-RNO-2142688">
    <property type="pathway name" value="Synthesis of 5-eicosatetraenoic acids"/>
</dbReference>
<dbReference type="Reactome" id="R-RNO-9754706">
    <property type="pathway name" value="Atorvastatin ADME"/>
</dbReference>
<dbReference type="PRO" id="PR:P55159"/>
<dbReference type="Proteomes" id="UP000002494">
    <property type="component" value="Chromosome 4"/>
</dbReference>
<dbReference type="Proteomes" id="UP000234681">
    <property type="component" value="Chromosome 4"/>
</dbReference>
<dbReference type="Bgee" id="ENSRNOG00000008902">
    <property type="expression patterns" value="Expressed in liver and 16 other cell types or tissues"/>
</dbReference>
<dbReference type="GO" id="GO:0005615">
    <property type="term" value="C:extracellular space"/>
    <property type="evidence" value="ECO:0000314"/>
    <property type="project" value="RGD"/>
</dbReference>
<dbReference type="GO" id="GO:0034364">
    <property type="term" value="C:high-density lipoprotein particle"/>
    <property type="evidence" value="ECO:0000266"/>
    <property type="project" value="RGD"/>
</dbReference>
<dbReference type="GO" id="GO:0034366">
    <property type="term" value="C:spherical high-density lipoprotein particle"/>
    <property type="evidence" value="ECO:0000266"/>
    <property type="project" value="RGD"/>
</dbReference>
<dbReference type="GO" id="GO:0102007">
    <property type="term" value="F:acyl-L-homoserine-lactone lactonohydrolase activity"/>
    <property type="evidence" value="ECO:0000266"/>
    <property type="project" value="RGD"/>
</dbReference>
<dbReference type="GO" id="GO:0004063">
    <property type="term" value="F:aryldialkylphosphatase activity"/>
    <property type="evidence" value="ECO:0000314"/>
    <property type="project" value="RGD"/>
</dbReference>
<dbReference type="GO" id="GO:0004064">
    <property type="term" value="F:arylesterase activity"/>
    <property type="evidence" value="ECO:0000250"/>
    <property type="project" value="UniProtKB"/>
</dbReference>
<dbReference type="GO" id="GO:0005509">
    <property type="term" value="F:calcium ion binding"/>
    <property type="evidence" value="ECO:0000250"/>
    <property type="project" value="UniProtKB"/>
</dbReference>
<dbReference type="GO" id="GO:0005543">
    <property type="term" value="F:phospholipid binding"/>
    <property type="evidence" value="ECO:0000266"/>
    <property type="project" value="RGD"/>
</dbReference>
<dbReference type="GO" id="GO:0042803">
    <property type="term" value="F:protein homodimerization activity"/>
    <property type="evidence" value="ECO:0000266"/>
    <property type="project" value="RGD"/>
</dbReference>
<dbReference type="GO" id="GO:0046395">
    <property type="term" value="P:carboxylic acid catabolic process"/>
    <property type="evidence" value="ECO:0000266"/>
    <property type="project" value="RGD"/>
</dbReference>
<dbReference type="GO" id="GO:0008203">
    <property type="term" value="P:cholesterol metabolic process"/>
    <property type="evidence" value="ECO:0000266"/>
    <property type="project" value="RGD"/>
</dbReference>
<dbReference type="GO" id="GO:1901335">
    <property type="term" value="P:lactone catabolic process"/>
    <property type="evidence" value="ECO:0000266"/>
    <property type="project" value="RGD"/>
</dbReference>
<dbReference type="GO" id="GO:0046434">
    <property type="term" value="P:organophosphate catabolic process"/>
    <property type="evidence" value="ECO:0000266"/>
    <property type="project" value="RGD"/>
</dbReference>
<dbReference type="GO" id="GO:0046470">
    <property type="term" value="P:phosphatidylcholine metabolic process"/>
    <property type="evidence" value="ECO:0000266"/>
    <property type="project" value="RGD"/>
</dbReference>
<dbReference type="GO" id="GO:0010875">
    <property type="term" value="P:positive regulation of cholesterol efflux"/>
    <property type="evidence" value="ECO:0000266"/>
    <property type="project" value="RGD"/>
</dbReference>
<dbReference type="GO" id="GO:0070542">
    <property type="term" value="P:response to fatty acid"/>
    <property type="evidence" value="ECO:0000270"/>
    <property type="project" value="RGD"/>
</dbReference>
<dbReference type="GO" id="GO:1902617">
    <property type="term" value="P:response to fluoride"/>
    <property type="evidence" value="ECO:0000314"/>
    <property type="project" value="RGD"/>
</dbReference>
<dbReference type="GO" id="GO:0032496">
    <property type="term" value="P:response to lipopolysaccharide"/>
    <property type="evidence" value="ECO:0000270"/>
    <property type="project" value="RGD"/>
</dbReference>
<dbReference type="GO" id="GO:0031667">
    <property type="term" value="P:response to nutrient levels"/>
    <property type="evidence" value="ECO:0000270"/>
    <property type="project" value="RGD"/>
</dbReference>
<dbReference type="GO" id="GO:0009636">
    <property type="term" value="P:response to toxic substance"/>
    <property type="evidence" value="ECO:0000266"/>
    <property type="project" value="RGD"/>
</dbReference>
<dbReference type="GO" id="GO:0009410">
    <property type="term" value="P:response to xenobiotic stimulus"/>
    <property type="evidence" value="ECO:0000270"/>
    <property type="project" value="RGD"/>
</dbReference>
<dbReference type="FunFam" id="2.120.10.30:FF:000023">
    <property type="entry name" value="Serum paraoxonase/arylesterase 2"/>
    <property type="match status" value="1"/>
</dbReference>
<dbReference type="Gene3D" id="2.120.10.30">
    <property type="entry name" value="TolB, C-terminal domain"/>
    <property type="match status" value="1"/>
</dbReference>
<dbReference type="InterPro" id="IPR011042">
    <property type="entry name" value="6-blade_b-propeller_TolB-like"/>
</dbReference>
<dbReference type="InterPro" id="IPR002640">
    <property type="entry name" value="Arylesterase"/>
</dbReference>
<dbReference type="InterPro" id="IPR008363">
    <property type="entry name" value="Paraoxonase1"/>
</dbReference>
<dbReference type="InterPro" id="IPR051288">
    <property type="entry name" value="Serum_paraoxonase/arylesterase"/>
</dbReference>
<dbReference type="PANTHER" id="PTHR11799">
    <property type="entry name" value="PARAOXONASE"/>
    <property type="match status" value="1"/>
</dbReference>
<dbReference type="PANTHER" id="PTHR11799:SF16">
    <property type="entry name" value="SERUM PARAOXONASE_ARYLESTERASE 1"/>
    <property type="match status" value="1"/>
</dbReference>
<dbReference type="Pfam" id="PF01731">
    <property type="entry name" value="Arylesterase"/>
    <property type="match status" value="1"/>
</dbReference>
<dbReference type="PRINTS" id="PR01785">
    <property type="entry name" value="PARAOXONASE"/>
</dbReference>
<dbReference type="PRINTS" id="PR01786">
    <property type="entry name" value="PARAOXONASE1"/>
</dbReference>
<dbReference type="SUPFAM" id="SSF63829">
    <property type="entry name" value="Calcium-dependent phosphotriesterase"/>
    <property type="match status" value="1"/>
</dbReference>
<name>PON1_RAT</name>
<evidence type="ECO:0000250" key="1"/>
<evidence type="ECO:0000250" key="2">
    <source>
        <dbReference type="UniProtKB" id="P27169"/>
    </source>
</evidence>
<evidence type="ECO:0000255" key="3"/>
<evidence type="ECO:0000269" key="4">
    <source>
    </source>
</evidence>
<evidence type="ECO:0000269" key="5">
    <source ref="4"/>
</evidence>
<evidence type="ECO:0000305" key="6"/>
<organism>
    <name type="scientific">Rattus norvegicus</name>
    <name type="common">Rat</name>
    <dbReference type="NCBI Taxonomy" id="10116"/>
    <lineage>
        <taxon>Eukaryota</taxon>
        <taxon>Metazoa</taxon>
        <taxon>Chordata</taxon>
        <taxon>Craniata</taxon>
        <taxon>Vertebrata</taxon>
        <taxon>Euteleostomi</taxon>
        <taxon>Mammalia</taxon>
        <taxon>Eutheria</taxon>
        <taxon>Euarchontoglires</taxon>
        <taxon>Glires</taxon>
        <taxon>Rodentia</taxon>
        <taxon>Myomorpha</taxon>
        <taxon>Muroidea</taxon>
        <taxon>Muridae</taxon>
        <taxon>Murinae</taxon>
        <taxon>Rattus</taxon>
    </lineage>
</organism>
<accession>P55159</accession>
<accession>O08682</accession>
<accession>Q5BJN6</accession>
<reference key="1">
    <citation type="submission" date="2007-06" db="EMBL/GenBank/DDBJ databases">
        <authorList>
            <person name="Mural R.J."/>
            <person name="Adams M.D."/>
            <person name="Myers E.W."/>
            <person name="Smith H.O."/>
            <person name="Venter J.C."/>
        </authorList>
    </citation>
    <scope>NUCLEOTIDE SEQUENCE [LARGE SCALE GENOMIC DNA]</scope>
</reference>
<reference key="2">
    <citation type="journal article" date="2004" name="Genome Res.">
        <title>The status, quality, and expansion of the NIH full-length cDNA project: the Mammalian Gene Collection (MGC).</title>
        <authorList>
            <consortium name="The MGC Project Team"/>
        </authorList>
    </citation>
    <scope>NUCLEOTIDE SEQUENCE [LARGE SCALE MRNA]</scope>
    <source>
        <tissue>Liver</tissue>
    </source>
</reference>
<reference key="3">
    <citation type="journal article" date="1997" name="Biochem. J.">
        <title>Purification and characterization of paraoxon hydrolase from rat liver.</title>
        <authorList>
            <person name="Rodrigo L."/>
            <person name="Gil F."/>
            <person name="Hernandez A.F."/>
            <person name="Marina A."/>
            <person name="Vazquez J."/>
            <person name="Pla A."/>
        </authorList>
    </citation>
    <scope>PROTEIN SEQUENCE OF 2-11; 47-56 AND 307-316</scope>
    <source>
        <strain>Wistar</strain>
        <tissue>Liver</tissue>
    </source>
</reference>
<reference key="4">
    <citation type="submission" date="1995-01" db="UniProtKB">
        <authorList>
            <person name="Blatter M.-C."/>
        </authorList>
    </citation>
    <scope>PROTEIN SEQUENCE OF 2-26</scope>
</reference>
<reference key="5">
    <citation type="submission" date="1997-04" db="EMBL/GenBank/DDBJ databases">
        <title>Rat paraoxonase partial mRNA sequence.</title>
        <authorList>
            <person name="Leviev I.G."/>
            <person name="Blatter M.-C."/>
            <person name="James R.W."/>
        </authorList>
    </citation>
    <scope>NUCLEOTIDE SEQUENCE [MRNA] OF 11-355</scope>
</reference>
<comment type="function">
    <text evidence="2">Hydrolyzes the toxic metabolites of a variety of organophosphorus insecticides. Capable of hydrolyzing a broad spectrum of organophosphate substrates and lactones, and a number of aromatic carboxylic acid esters. Mediates an enzymatic protection of low density lipoproteins against oxidative modification.</text>
</comment>
<comment type="catalytic activity">
    <reaction evidence="2">
        <text>a phenyl acetate + H2O = a phenol + acetate + H(+)</text>
        <dbReference type="Rhea" id="RHEA:17309"/>
        <dbReference type="ChEBI" id="CHEBI:15377"/>
        <dbReference type="ChEBI" id="CHEBI:15378"/>
        <dbReference type="ChEBI" id="CHEBI:30089"/>
        <dbReference type="ChEBI" id="CHEBI:33853"/>
        <dbReference type="ChEBI" id="CHEBI:140310"/>
        <dbReference type="EC" id="3.1.1.2"/>
    </reaction>
</comment>
<comment type="catalytic activity">
    <reaction evidence="2">
        <text>An aryl dialkyl phosphate + H2O = dialkyl phosphate + an aryl alcohol.</text>
        <dbReference type="EC" id="3.1.8.1"/>
    </reaction>
</comment>
<comment type="catalytic activity">
    <reaction evidence="2">
        <text>an N-acyl-L-homoserine lactone + H2O = an N-acyl-L-homoserine + H(+)</text>
        <dbReference type="Rhea" id="RHEA:22576"/>
        <dbReference type="ChEBI" id="CHEBI:15377"/>
        <dbReference type="ChEBI" id="CHEBI:15378"/>
        <dbReference type="ChEBI" id="CHEBI:55474"/>
        <dbReference type="ChEBI" id="CHEBI:58921"/>
        <dbReference type="EC" id="3.1.1.81"/>
    </reaction>
</comment>
<comment type="cofactor">
    <cofactor evidence="1">
        <name>Ca(2+)</name>
        <dbReference type="ChEBI" id="CHEBI:29108"/>
    </cofactor>
    <text evidence="1">Binds 2 calcium ions per subunit.</text>
</comment>
<comment type="subunit">
    <text evidence="2">Homodimer. Interacts with CLU.</text>
</comment>
<comment type="subcellular location">
    <subcellularLocation>
        <location>Secreted</location>
        <location>Extracellular space</location>
    </subcellularLocation>
</comment>
<comment type="tissue specificity">
    <text>Plasma. Associated with HDL.</text>
</comment>
<comment type="PTM">
    <text evidence="2">Glycosylated.</text>
</comment>
<comment type="PTM">
    <text>The signal sequence is not cleaved.</text>
</comment>
<comment type="miscellaneous">
    <text evidence="2">The preferential association of PON1 with HDL is mediated in part by its signal peptide, by binding phospholipids directly, rather than binding apo AI. The retained signal peptide may allow transfer of the protein between phospholipid surfaces.</text>
</comment>
<comment type="similarity">
    <text evidence="6">Belongs to the paraoxonase family.</text>
</comment>
<feature type="initiator methionine" description="Removed" evidence="4 5">
    <location>
        <position position="1"/>
    </location>
</feature>
<feature type="chain" id="PRO_0000223284" description="Serum paraoxonase/arylesterase 1">
    <location>
        <begin position="2"/>
        <end position="355"/>
    </location>
</feature>
<feature type="signal peptide" description="Not cleaved">
    <location>
        <begin position="2"/>
        <end status="unknown"/>
    </location>
</feature>
<feature type="active site" description="Proton acceptor" evidence="2">
    <location>
        <position position="115"/>
    </location>
</feature>
<feature type="binding site" evidence="2">
    <location>
        <position position="53"/>
    </location>
    <ligand>
        <name>Ca(2+)</name>
        <dbReference type="ChEBI" id="CHEBI:29108"/>
        <label>1</label>
        <note>catalytic</note>
    </ligand>
</feature>
<feature type="binding site" evidence="2">
    <location>
        <position position="54"/>
    </location>
    <ligand>
        <name>Ca(2+)</name>
        <dbReference type="ChEBI" id="CHEBI:29108"/>
        <label>2</label>
    </ligand>
</feature>
<feature type="binding site" evidence="2">
    <location>
        <position position="117"/>
    </location>
    <ligand>
        <name>Ca(2+)</name>
        <dbReference type="ChEBI" id="CHEBI:29108"/>
        <label>2</label>
    </ligand>
</feature>
<feature type="binding site" evidence="2">
    <location>
        <position position="168"/>
    </location>
    <ligand>
        <name>Ca(2+)</name>
        <dbReference type="ChEBI" id="CHEBI:29108"/>
        <label>1</label>
        <note>catalytic</note>
    </ligand>
</feature>
<feature type="binding site" evidence="2">
    <location>
        <position position="169"/>
    </location>
    <ligand>
        <name>Ca(2+)</name>
        <dbReference type="ChEBI" id="CHEBI:29108"/>
        <label>2</label>
    </ligand>
</feature>
<feature type="binding site" evidence="2">
    <location>
        <position position="224"/>
    </location>
    <ligand>
        <name>Ca(2+)</name>
        <dbReference type="ChEBI" id="CHEBI:29108"/>
        <label>1</label>
        <note>catalytic</note>
    </ligand>
</feature>
<feature type="binding site" evidence="2">
    <location>
        <position position="269"/>
    </location>
    <ligand>
        <name>Ca(2+)</name>
        <dbReference type="ChEBI" id="CHEBI:29108"/>
        <label>1</label>
        <note>catalytic</note>
    </ligand>
</feature>
<feature type="binding site" evidence="2">
    <location>
        <position position="270"/>
    </location>
    <ligand>
        <name>Ca(2+)</name>
        <dbReference type="ChEBI" id="CHEBI:29108"/>
        <label>1</label>
        <note>catalytic</note>
    </ligand>
</feature>
<feature type="glycosylation site" description="N-linked (GlcNAc...) asparagine" evidence="3">
    <location>
        <position position="253"/>
    </location>
</feature>
<feature type="glycosylation site" description="N-linked (GlcNAc...) asparagine" evidence="3">
    <location>
        <position position="270"/>
    </location>
</feature>
<feature type="glycosylation site" description="N-linked (GlcNAc...) asparagine" evidence="3">
    <location>
        <position position="324"/>
    </location>
</feature>
<feature type="disulfide bond" evidence="2">
    <location>
        <begin position="42"/>
        <end position="353"/>
    </location>
</feature>
<feature type="sequence conflict" description="In Ref. 4; AA sequence." evidence="6" ref="4">
    <original>HRSSYQT</original>
    <variation>PLXDWYR</variation>
    <location>
        <begin position="20"/>
        <end position="26"/>
    </location>
</feature>
<feature type="sequence conflict" description="In Ref. 5; AAB53441." evidence="6" ref="5">
    <original>G</original>
    <variation>F</variation>
    <location>
        <position position="68"/>
    </location>
</feature>
<feature type="sequence conflict" description="In Ref. 5; AAB53441." evidence="6" ref="5">
    <original>D</original>
    <variation>Y</variation>
    <location>
        <position position="354"/>
    </location>
</feature>
<protein>
    <recommendedName>
        <fullName>Serum paraoxonase/arylesterase 1</fullName>
        <shortName>PON 1</shortName>
        <ecNumber evidence="2">3.1.1.2</ecNumber>
        <ecNumber evidence="2">3.1.1.81</ecNumber>
        <ecNumber evidence="2">3.1.8.1</ecNumber>
    </recommendedName>
    <alternativeName>
        <fullName>Aromatic esterase 1</fullName>
        <shortName>A-esterase 1</shortName>
    </alternativeName>
    <alternativeName>
        <fullName>Serum aryldialkylphosphatase 1</fullName>
    </alternativeName>
</protein>
<gene>
    <name type="primary">Pon1</name>
    <name type="synonym">Pon</name>
</gene>
<sequence>MAKLLGLTLVGLVLALYKNHRSSYQTRLNAFREVTPVDLPNCTLVKGIEAGAEDLEILPNGLTFFSTGLKYPGIKSFDPSKPGKILLMDLNEKEPAVSELAIMGNTLDMSSFNPHGISTFIDEDNTVYLLVVSHPDSSSTVEVFKFQEEERSLLHLKTITHELLPSINDIAAVGPESFYATNDHYFADPYLRSWEMYLGLSWSNVVYYSPDKVRVVADGFDFANGIGISLDGKYVYIAELLAHKIHVYEKHANWTLTPLKVLSFDTLVDNISVDPVTGDLWVGCHPNGMRIFFYDSENPPGSEVLRIQSILSEDPKVTVVYAENGTVLQGTTVAAVYKGKLLIGTVFHRALCCDL</sequence>
<proteinExistence type="evidence at protein level"/>
<keyword id="KW-0106">Calcium</keyword>
<keyword id="KW-0903">Direct protein sequencing</keyword>
<keyword id="KW-1015">Disulfide bond</keyword>
<keyword id="KW-0325">Glycoprotein</keyword>
<keyword id="KW-0345">HDL</keyword>
<keyword id="KW-0378">Hydrolase</keyword>
<keyword id="KW-0479">Metal-binding</keyword>
<keyword id="KW-1185">Reference proteome</keyword>
<keyword id="KW-0964">Secreted</keyword>
<keyword id="KW-0732">Signal</keyword>